<comment type="function">
    <text evidence="1">RuBisCO catalyzes two reactions: the carboxylation of D-ribulose 1,5-bisphosphate, the primary event in carbon dioxide fixation, as well as the oxidative fragmentation of the pentose substrate in the photorespiration process. Both reactions occur simultaneously and in competition at the same active site.</text>
</comment>
<comment type="catalytic activity">
    <reaction evidence="1">
        <text>2 (2R)-3-phosphoglycerate + 2 H(+) = D-ribulose 1,5-bisphosphate + CO2 + H2O</text>
        <dbReference type="Rhea" id="RHEA:23124"/>
        <dbReference type="ChEBI" id="CHEBI:15377"/>
        <dbReference type="ChEBI" id="CHEBI:15378"/>
        <dbReference type="ChEBI" id="CHEBI:16526"/>
        <dbReference type="ChEBI" id="CHEBI:57870"/>
        <dbReference type="ChEBI" id="CHEBI:58272"/>
        <dbReference type="EC" id="4.1.1.39"/>
    </reaction>
</comment>
<comment type="catalytic activity">
    <reaction evidence="1">
        <text>D-ribulose 1,5-bisphosphate + O2 = 2-phosphoglycolate + (2R)-3-phosphoglycerate + 2 H(+)</text>
        <dbReference type="Rhea" id="RHEA:36631"/>
        <dbReference type="ChEBI" id="CHEBI:15378"/>
        <dbReference type="ChEBI" id="CHEBI:15379"/>
        <dbReference type="ChEBI" id="CHEBI:57870"/>
        <dbReference type="ChEBI" id="CHEBI:58033"/>
        <dbReference type="ChEBI" id="CHEBI:58272"/>
    </reaction>
</comment>
<comment type="cofactor">
    <cofactor evidence="1">
        <name>Mg(2+)</name>
        <dbReference type="ChEBI" id="CHEBI:18420"/>
    </cofactor>
    <text evidence="1">Binds 1 Mg(2+) ion per subunit.</text>
</comment>
<comment type="subunit">
    <text evidence="1">Heterohexadecamer of 8 large chains and 8 small chains; disulfide-linked. The disulfide link is formed within the large subunit homodimers.</text>
</comment>
<comment type="subcellular location">
    <subcellularLocation>
        <location>Plastid</location>
        <location>Chloroplast</location>
    </subcellularLocation>
</comment>
<comment type="PTM">
    <text evidence="1">The disulfide bond which can form in the large chain dimeric partners within the hexadecamer appears to be associated with oxidative stress and protein turnover.</text>
</comment>
<comment type="miscellaneous">
    <text evidence="1">The basic functional RuBisCO is composed of a large chain homodimer in a 'head-to-tail' conformation. In form I RuBisCO this homodimer is arranged in a barrel-like tetramer with the small subunits forming a tetrameric 'cap' on each end of the 'barrel'.</text>
</comment>
<comment type="similarity">
    <text evidence="1">Belongs to the RuBisCO large chain family. Type I subfamily.</text>
</comment>
<geneLocation type="chloroplast"/>
<sequence length="455" mass="50317">SVGFKAGVKDYKLTYYTPDYKTKDTDILAAFRVTPQPGVPPEEAGAAVAAESSTGTWTTVWTDGLTSLDRYKGRCYHIEPVAGEESQFIAYVAYPLDLFEEGSVTNMFTSIVGNVFGFKALRALRLEDLRIPNAYVKTFQGPPHGIQVERDKLNKYGRPLLGCTIKPKLGLSAKNYGRAVYECLRGGLDFTKDDENVNSQPFMRWRDRFLFCAEALYKAQAETGEIKGHYLNATAGTCEEMIKRAVFARELGVPIVMHDYLTGGFTANTTLSHYCRDNGLLLHIHRAMHAVIDRQKNHGMHFRVLAKALRLSGGDHIHSGTVVGKLEGEREITLGFVDLLRDDFVEKDRSRGIYFTQDWVSLPGVLPVASGGIHVWHMPALTEIFGDDSVLQFGGGTLGHPWGNAPGAVANRVALEACVQARNEGRDLASEGNQIIREASKWSPELAAACEVWKE</sequence>
<name>RBL_LUPPE</name>
<organism>
    <name type="scientific">Lupinus perennis</name>
    <name type="common">Sundial lupine</name>
    <dbReference type="NCBI Taxonomy" id="53236"/>
    <lineage>
        <taxon>Eukaryota</taxon>
        <taxon>Viridiplantae</taxon>
        <taxon>Streptophyta</taxon>
        <taxon>Embryophyta</taxon>
        <taxon>Tracheophyta</taxon>
        <taxon>Spermatophyta</taxon>
        <taxon>Magnoliopsida</taxon>
        <taxon>eudicotyledons</taxon>
        <taxon>Gunneridae</taxon>
        <taxon>Pentapetalae</taxon>
        <taxon>rosids</taxon>
        <taxon>fabids</taxon>
        <taxon>Fabales</taxon>
        <taxon>Fabaceae</taxon>
        <taxon>Papilionoideae</taxon>
        <taxon>50 kb inversion clade</taxon>
        <taxon>genistoids sensu lato</taxon>
        <taxon>core genistoids</taxon>
        <taxon>Genisteae</taxon>
        <taxon>Lupinus</taxon>
    </lineage>
</organism>
<protein>
    <recommendedName>
        <fullName evidence="1">Ribulose bisphosphate carboxylase large chain</fullName>
        <shortName evidence="1">RuBisCO large subunit</shortName>
        <ecNumber evidence="1">4.1.1.39</ecNumber>
    </recommendedName>
</protein>
<gene>
    <name evidence="1" type="primary">rbcL</name>
</gene>
<feature type="chain" id="PRO_0000062525" description="Ribulose bisphosphate carboxylase large chain">
    <location>
        <begin position="1" status="less than"/>
        <end position="455" status="greater than"/>
    </location>
</feature>
<feature type="active site" description="Proton acceptor" evidence="1">
    <location>
        <position position="166"/>
    </location>
</feature>
<feature type="active site" description="Proton acceptor" evidence="1">
    <location>
        <position position="285"/>
    </location>
</feature>
<feature type="binding site" description="in homodimeric partner" evidence="1">
    <location>
        <position position="114"/>
    </location>
    <ligand>
        <name>substrate</name>
    </ligand>
</feature>
<feature type="binding site" evidence="1">
    <location>
        <position position="164"/>
    </location>
    <ligand>
        <name>substrate</name>
    </ligand>
</feature>
<feature type="binding site" evidence="1">
    <location>
        <position position="168"/>
    </location>
    <ligand>
        <name>substrate</name>
    </ligand>
</feature>
<feature type="binding site" description="via carbamate group" evidence="1">
    <location>
        <position position="192"/>
    </location>
    <ligand>
        <name>Mg(2+)</name>
        <dbReference type="ChEBI" id="CHEBI:18420"/>
    </ligand>
</feature>
<feature type="binding site" evidence="1">
    <location>
        <position position="194"/>
    </location>
    <ligand>
        <name>Mg(2+)</name>
        <dbReference type="ChEBI" id="CHEBI:18420"/>
    </ligand>
</feature>
<feature type="binding site" evidence="1">
    <location>
        <position position="195"/>
    </location>
    <ligand>
        <name>Mg(2+)</name>
        <dbReference type="ChEBI" id="CHEBI:18420"/>
    </ligand>
</feature>
<feature type="binding site" evidence="1">
    <location>
        <position position="286"/>
    </location>
    <ligand>
        <name>substrate</name>
    </ligand>
</feature>
<feature type="binding site" evidence="1">
    <location>
        <position position="318"/>
    </location>
    <ligand>
        <name>substrate</name>
    </ligand>
</feature>
<feature type="binding site" evidence="1">
    <location>
        <position position="370"/>
    </location>
    <ligand>
        <name>substrate</name>
    </ligand>
</feature>
<feature type="site" description="Transition state stabilizer" evidence="1">
    <location>
        <position position="325"/>
    </location>
</feature>
<feature type="modified residue" description="N6,N6,N6-trimethyllysine" evidence="1">
    <location>
        <position position="5"/>
    </location>
</feature>
<feature type="modified residue" description="N6-carboxylysine" evidence="1">
    <location>
        <position position="192"/>
    </location>
</feature>
<feature type="disulfide bond" description="Interchain; in linked form" evidence="1">
    <location>
        <position position="238"/>
    </location>
</feature>
<feature type="non-terminal residue">
    <location>
        <position position="1"/>
    </location>
</feature>
<feature type="non-terminal residue">
    <location>
        <position position="455"/>
    </location>
</feature>
<proteinExistence type="inferred from homology"/>
<evidence type="ECO:0000255" key="1">
    <source>
        <dbReference type="HAMAP-Rule" id="MF_01338"/>
    </source>
</evidence>
<accession>P69588</accession>
<accession>P52775</accession>
<keyword id="KW-0113">Calvin cycle</keyword>
<keyword id="KW-0120">Carbon dioxide fixation</keyword>
<keyword id="KW-0150">Chloroplast</keyword>
<keyword id="KW-1015">Disulfide bond</keyword>
<keyword id="KW-0456">Lyase</keyword>
<keyword id="KW-0460">Magnesium</keyword>
<keyword id="KW-0479">Metal-binding</keyword>
<keyword id="KW-0488">Methylation</keyword>
<keyword id="KW-0503">Monooxygenase</keyword>
<keyword id="KW-0560">Oxidoreductase</keyword>
<keyword id="KW-0601">Photorespiration</keyword>
<keyword id="KW-0602">Photosynthesis</keyword>
<keyword id="KW-0934">Plastid</keyword>
<dbReference type="EC" id="4.1.1.39" evidence="1"/>
<dbReference type="EMBL" id="Z70058">
    <property type="protein sequence ID" value="CAA93917.1"/>
    <property type="molecule type" value="Genomic_DNA"/>
</dbReference>
<dbReference type="SMR" id="P69588"/>
<dbReference type="GO" id="GO:0009507">
    <property type="term" value="C:chloroplast"/>
    <property type="evidence" value="ECO:0007669"/>
    <property type="project" value="UniProtKB-SubCell"/>
</dbReference>
<dbReference type="GO" id="GO:0000287">
    <property type="term" value="F:magnesium ion binding"/>
    <property type="evidence" value="ECO:0007669"/>
    <property type="project" value="InterPro"/>
</dbReference>
<dbReference type="GO" id="GO:0004497">
    <property type="term" value="F:monooxygenase activity"/>
    <property type="evidence" value="ECO:0007669"/>
    <property type="project" value="UniProtKB-KW"/>
</dbReference>
<dbReference type="GO" id="GO:0016984">
    <property type="term" value="F:ribulose-bisphosphate carboxylase activity"/>
    <property type="evidence" value="ECO:0007669"/>
    <property type="project" value="UniProtKB-EC"/>
</dbReference>
<dbReference type="GO" id="GO:0009853">
    <property type="term" value="P:photorespiration"/>
    <property type="evidence" value="ECO:0007669"/>
    <property type="project" value="UniProtKB-KW"/>
</dbReference>
<dbReference type="GO" id="GO:0019253">
    <property type="term" value="P:reductive pentose-phosphate cycle"/>
    <property type="evidence" value="ECO:0007669"/>
    <property type="project" value="UniProtKB-KW"/>
</dbReference>
<dbReference type="CDD" id="cd08212">
    <property type="entry name" value="RuBisCO_large_I"/>
    <property type="match status" value="1"/>
</dbReference>
<dbReference type="FunFam" id="3.20.20.110:FF:000001">
    <property type="entry name" value="Ribulose bisphosphate carboxylase large chain"/>
    <property type="match status" value="1"/>
</dbReference>
<dbReference type="FunFam" id="3.30.70.150:FF:000001">
    <property type="entry name" value="Ribulose bisphosphate carboxylase large chain"/>
    <property type="match status" value="1"/>
</dbReference>
<dbReference type="Gene3D" id="3.20.20.110">
    <property type="entry name" value="Ribulose bisphosphate carboxylase, large subunit, C-terminal domain"/>
    <property type="match status" value="1"/>
</dbReference>
<dbReference type="Gene3D" id="3.30.70.150">
    <property type="entry name" value="RuBisCO large subunit, N-terminal domain"/>
    <property type="match status" value="1"/>
</dbReference>
<dbReference type="HAMAP" id="MF_01338">
    <property type="entry name" value="RuBisCO_L_type1"/>
    <property type="match status" value="1"/>
</dbReference>
<dbReference type="InterPro" id="IPR033966">
    <property type="entry name" value="RuBisCO"/>
</dbReference>
<dbReference type="InterPro" id="IPR020878">
    <property type="entry name" value="RuBisCo_large_chain_AS"/>
</dbReference>
<dbReference type="InterPro" id="IPR000685">
    <property type="entry name" value="RuBisCO_lsu_C"/>
</dbReference>
<dbReference type="InterPro" id="IPR036376">
    <property type="entry name" value="RuBisCO_lsu_C_sf"/>
</dbReference>
<dbReference type="InterPro" id="IPR017443">
    <property type="entry name" value="RuBisCO_lsu_fd_N"/>
</dbReference>
<dbReference type="InterPro" id="IPR036422">
    <property type="entry name" value="RuBisCO_lsu_N_sf"/>
</dbReference>
<dbReference type="InterPro" id="IPR020888">
    <property type="entry name" value="RuBisCO_lsuI"/>
</dbReference>
<dbReference type="NCBIfam" id="NF003252">
    <property type="entry name" value="PRK04208.1"/>
    <property type="match status" value="1"/>
</dbReference>
<dbReference type="PANTHER" id="PTHR42704">
    <property type="entry name" value="RIBULOSE BISPHOSPHATE CARBOXYLASE"/>
    <property type="match status" value="1"/>
</dbReference>
<dbReference type="PANTHER" id="PTHR42704:SF16">
    <property type="entry name" value="RIBULOSE BISPHOSPHATE CARBOXYLASE LARGE CHAIN"/>
    <property type="match status" value="1"/>
</dbReference>
<dbReference type="Pfam" id="PF00016">
    <property type="entry name" value="RuBisCO_large"/>
    <property type="match status" value="1"/>
</dbReference>
<dbReference type="Pfam" id="PF02788">
    <property type="entry name" value="RuBisCO_large_N"/>
    <property type="match status" value="1"/>
</dbReference>
<dbReference type="SFLD" id="SFLDG01052">
    <property type="entry name" value="RuBisCO"/>
    <property type="match status" value="1"/>
</dbReference>
<dbReference type="SFLD" id="SFLDS00014">
    <property type="entry name" value="RuBisCO"/>
    <property type="match status" value="1"/>
</dbReference>
<dbReference type="SFLD" id="SFLDG00301">
    <property type="entry name" value="RuBisCO-like_proteins"/>
    <property type="match status" value="1"/>
</dbReference>
<dbReference type="SUPFAM" id="SSF51649">
    <property type="entry name" value="RuBisCo, C-terminal domain"/>
    <property type="match status" value="1"/>
</dbReference>
<dbReference type="SUPFAM" id="SSF54966">
    <property type="entry name" value="RuBisCO, large subunit, small (N-terminal) domain"/>
    <property type="match status" value="1"/>
</dbReference>
<dbReference type="PROSITE" id="PS00157">
    <property type="entry name" value="RUBISCO_LARGE"/>
    <property type="match status" value="1"/>
</dbReference>
<reference key="1">
    <citation type="journal article" date="1995" name="Bot. Acta">
        <title>Molecular phylogeny of the Papilionoideae (family Leguminosae): rbcL sequences versus chemical taxonomy.</title>
        <authorList>
            <person name="Kaess E."/>
            <person name="Wink M."/>
        </authorList>
    </citation>
    <scope>NUCLEOTIDE SEQUENCE [GENOMIC DNA]</scope>
    <source>
        <tissue>Leaf</tissue>
    </source>
</reference>